<feature type="transit peptide" description="Mitochondrion" evidence="2">
    <location>
        <begin position="1"/>
        <end position="20"/>
    </location>
</feature>
<feature type="chain" id="PRO_0000001720" description="Alternative oxidase, mitochondrial">
    <location>
        <begin position="21"/>
        <end position="342"/>
    </location>
</feature>
<feature type="transmembrane region" description="Helical" evidence="2">
    <location>
        <begin position="135"/>
        <end position="155"/>
    </location>
</feature>
<feature type="transmembrane region" description="Helical" evidence="2">
    <location>
        <begin position="200"/>
        <end position="220"/>
    </location>
</feature>
<feature type="region of interest" description="Disordered" evidence="3">
    <location>
        <begin position="308"/>
        <end position="342"/>
    </location>
</feature>
<feature type="compositionally biased region" description="Basic and acidic residues" evidence="3">
    <location>
        <begin position="308"/>
        <end position="321"/>
    </location>
</feature>
<feature type="compositionally biased region" description="Basic and acidic residues" evidence="3">
    <location>
        <begin position="330"/>
        <end position="342"/>
    </location>
</feature>
<feature type="binding site" evidence="1">
    <location>
        <position position="142"/>
    </location>
    <ligand>
        <name>Fe cation</name>
        <dbReference type="ChEBI" id="CHEBI:24875"/>
        <label>1</label>
    </ligand>
</feature>
<feature type="binding site" evidence="1">
    <location>
        <position position="181"/>
    </location>
    <ligand>
        <name>Fe cation</name>
        <dbReference type="ChEBI" id="CHEBI:24875"/>
        <label>1</label>
    </ligand>
</feature>
<feature type="binding site" evidence="1">
    <location>
        <position position="181"/>
    </location>
    <ligand>
        <name>Fe cation</name>
        <dbReference type="ChEBI" id="CHEBI:24875"/>
        <label>2</label>
    </ligand>
</feature>
<feature type="binding site" evidence="1">
    <location>
        <position position="184"/>
    </location>
    <ligand>
        <name>Fe cation</name>
        <dbReference type="ChEBI" id="CHEBI:24875"/>
        <label>1</label>
    </ligand>
</feature>
<feature type="binding site" evidence="1">
    <location>
        <position position="232"/>
    </location>
    <ligand>
        <name>Fe cation</name>
        <dbReference type="ChEBI" id="CHEBI:24875"/>
        <label>2</label>
    </ligand>
</feature>
<feature type="binding site" evidence="1">
    <location>
        <position position="287"/>
    </location>
    <ligand>
        <name>Fe cation</name>
        <dbReference type="ChEBI" id="CHEBI:24875"/>
        <label>1</label>
    </ligand>
</feature>
<feature type="binding site" evidence="1">
    <location>
        <position position="287"/>
    </location>
    <ligand>
        <name>Fe cation</name>
        <dbReference type="ChEBI" id="CHEBI:24875"/>
        <label>2</label>
    </ligand>
</feature>
<feature type="binding site" evidence="1">
    <location>
        <position position="290"/>
    </location>
    <ligand>
        <name>Fe cation</name>
        <dbReference type="ChEBI" id="CHEBI:24875"/>
        <label>2</label>
    </ligand>
</feature>
<feature type="disulfide bond" description="Interchain" evidence="2">
    <location>
        <position position="99"/>
    </location>
</feature>
<proteinExistence type="evidence at protein level"/>
<sequence>MIKTYQYRSILNSRNVGIRFLKTLSPSPHSKDPNSKSIFDIGTKLIVNPPPQMADNQYVTHPLFPHPKYSDEDCEAVHFVHREPKTIGDKIADRGVKFCRASFDFVTGYKKPKDVNGMLKSWEGTRYEMTEEKWLTRCIFLESVAGVPGMVAAFIRHLHSLRLLKRDKAWIETLLDEAYNERMHLLTFIKIGNPSWFTRFIIYMGQGVFANLFFLVYLIKPRYCHRFVGYLEEEAVSTYTHLIKDIDSKRLPKFDDVNLPEISWLYWTDLNEKSTFRDLIQRIRADESKHREVNHTLANLEQKKDRNPFALKVEDVPKEQQPDEYSLKTPHPEGWNREQMRL</sequence>
<name>AOX_WICAO</name>
<gene>
    <name type="primary">AOX1</name>
    <name type="synonym">ALX1</name>
</gene>
<organism>
    <name type="scientific">Wickerhamomyces anomalus</name>
    <name type="common">Yeast</name>
    <name type="synonym">Hansenula anomala</name>
    <dbReference type="NCBI Taxonomy" id="4927"/>
    <lineage>
        <taxon>Eukaryota</taxon>
        <taxon>Fungi</taxon>
        <taxon>Dikarya</taxon>
        <taxon>Ascomycota</taxon>
        <taxon>Saccharomycotina</taxon>
        <taxon>Saccharomycetes</taxon>
        <taxon>Phaffomycetales</taxon>
        <taxon>Wickerhamomycetaceae</taxon>
        <taxon>Wickerhamomyces</taxon>
    </lineage>
</organism>
<evidence type="ECO:0000250" key="1">
    <source>
        <dbReference type="UniProtKB" id="Q26710"/>
    </source>
</evidence>
<evidence type="ECO:0000255" key="2"/>
<evidence type="ECO:0000256" key="3">
    <source>
        <dbReference type="SAM" id="MobiDB-lite"/>
    </source>
</evidence>
<evidence type="ECO:0000305" key="4"/>
<accession>Q00912</accession>
<keyword id="KW-1015">Disulfide bond</keyword>
<keyword id="KW-0249">Electron transport</keyword>
<keyword id="KW-0408">Iron</keyword>
<keyword id="KW-0472">Membrane</keyword>
<keyword id="KW-0479">Metal-binding</keyword>
<keyword id="KW-0496">Mitochondrion</keyword>
<keyword id="KW-0999">Mitochondrion inner membrane</keyword>
<keyword id="KW-0560">Oxidoreductase</keyword>
<keyword id="KW-0679">Respiratory chain</keyword>
<keyword id="KW-0809">Transit peptide</keyword>
<keyword id="KW-0812">Transmembrane</keyword>
<keyword id="KW-1133">Transmembrane helix</keyword>
<keyword id="KW-0813">Transport</keyword>
<comment type="function">
    <text>Catalyzes cyanide-resistant oxygen consumption. May increase respiration when the cytochrome respiratory pathway is restricted, or in response to low temperatures.</text>
</comment>
<comment type="cofactor">
    <cofactor evidence="1">
        <name>Fe cation</name>
        <dbReference type="ChEBI" id="CHEBI:24875"/>
    </cofactor>
    <text evidence="1">Binds 2 iron ions per subunit.</text>
</comment>
<comment type="subunit">
    <text evidence="4">Homodimer; disulfide-linked.</text>
</comment>
<comment type="subcellular location">
    <subcellularLocation>
        <location>Mitochondrion inner membrane</location>
        <topology>Multi-pass membrane protein</topology>
        <orientation>Matrix side</orientation>
    </subcellularLocation>
</comment>
<comment type="similarity">
    <text evidence="4">Belongs to the alternative oxidase family.</text>
</comment>
<protein>
    <recommendedName>
        <fullName>Alternative oxidase, mitochondrial</fullName>
        <ecNumber>1.-.-.-</ecNumber>
    </recommendedName>
</protein>
<reference key="1">
    <citation type="journal article" date="1991" name="Biochim. Biophys. Acta">
        <title>Molecular cloning of cDNA for antimycin A-inducible mRNA and its role in cyanide-resistant respiration in Hansenula anomala.</title>
        <authorList>
            <person name="Sakajo S."/>
            <person name="Minagawa N."/>
            <person name="Komiyama T."/>
            <person name="Yoshimoto A."/>
        </authorList>
    </citation>
    <scope>NUCLEOTIDE SEQUENCE [MRNA]</scope>
</reference>
<reference key="2">
    <citation type="journal article" date="1999" name="Biosci. Biotechnol. Biochem.">
        <title>Structure and regulatory expression of a single copy alternative oxidase gene from the yeast Pichia anomala.</title>
        <authorList>
            <person name="Sakajo S."/>
            <person name="Minagawa N."/>
            <person name="Yoshimoto A."/>
        </authorList>
    </citation>
    <scope>NUCLEOTIDE SEQUENCE [GENOMIC DNA]</scope>
    <source>
        <strain>ATCC 66094 / LKBY-1</strain>
    </source>
</reference>
<reference key="3">
    <citation type="journal article" date="1999" name="FEBS Lett.">
        <title>A revised model of the active site of alternative oxidase.</title>
        <authorList>
            <person name="Andersson M.E."/>
            <person name="Nordlund P."/>
        </authorList>
    </citation>
    <scope>IRON-BINDING SITES</scope>
</reference>
<dbReference type="EC" id="1.-.-.-"/>
<dbReference type="EMBL" id="D00741">
    <property type="protein sequence ID" value="BAA00641.1"/>
    <property type="molecule type" value="mRNA"/>
</dbReference>
<dbReference type="EMBL" id="AB026726">
    <property type="protein sequence ID" value="BAA90763.1"/>
    <property type="molecule type" value="Genomic_DNA"/>
</dbReference>
<dbReference type="PIR" id="S17517">
    <property type="entry name" value="S17517"/>
</dbReference>
<dbReference type="SMR" id="Q00912"/>
<dbReference type="GO" id="GO:0005743">
    <property type="term" value="C:mitochondrial inner membrane"/>
    <property type="evidence" value="ECO:0007669"/>
    <property type="project" value="UniProtKB-SubCell"/>
</dbReference>
<dbReference type="GO" id="GO:0009916">
    <property type="term" value="F:alternative oxidase activity"/>
    <property type="evidence" value="ECO:0007669"/>
    <property type="project" value="InterPro"/>
</dbReference>
<dbReference type="GO" id="GO:0046872">
    <property type="term" value="F:metal ion binding"/>
    <property type="evidence" value="ECO:0007669"/>
    <property type="project" value="UniProtKB-KW"/>
</dbReference>
<dbReference type="GO" id="GO:0010230">
    <property type="term" value="P:alternative respiration"/>
    <property type="evidence" value="ECO:0007669"/>
    <property type="project" value="TreeGrafter"/>
</dbReference>
<dbReference type="CDD" id="cd01053">
    <property type="entry name" value="AOX"/>
    <property type="match status" value="1"/>
</dbReference>
<dbReference type="FunFam" id="1.20.1260.140:FF:000002">
    <property type="entry name" value="Alternative oxidase"/>
    <property type="match status" value="1"/>
</dbReference>
<dbReference type="Gene3D" id="1.20.1260.140">
    <property type="entry name" value="Alternative oxidase"/>
    <property type="match status" value="1"/>
</dbReference>
<dbReference type="InterPro" id="IPR002680">
    <property type="entry name" value="AOX"/>
</dbReference>
<dbReference type="InterPro" id="IPR038659">
    <property type="entry name" value="AOX_sf"/>
</dbReference>
<dbReference type="PANTHER" id="PTHR31803">
    <property type="entry name" value="ALTERNATIVE OXIDASE"/>
    <property type="match status" value="1"/>
</dbReference>
<dbReference type="PANTHER" id="PTHR31803:SF3">
    <property type="entry name" value="ALTERNATIVE OXIDASE"/>
    <property type="match status" value="1"/>
</dbReference>
<dbReference type="Pfam" id="PF01786">
    <property type="entry name" value="AOX"/>
    <property type="match status" value="1"/>
</dbReference>
<dbReference type="PIRSF" id="PIRSF005229">
    <property type="entry name" value="AOX"/>
    <property type="match status" value="1"/>
</dbReference>